<dbReference type="EMBL" id="Y09507">
    <property type="protein sequence ID" value="CAA70701.1"/>
    <property type="molecule type" value="mRNA"/>
</dbReference>
<dbReference type="EMBL" id="AF057308">
    <property type="protein sequence ID" value="AAD24413.1"/>
    <property type="molecule type" value="mRNA"/>
</dbReference>
<dbReference type="PIR" id="JC5809">
    <property type="entry name" value="JC5809"/>
</dbReference>
<dbReference type="RefSeq" id="NP_077335.1">
    <property type="nucleotide sequence ID" value="NM_024359.1"/>
</dbReference>
<dbReference type="SMR" id="O35800"/>
<dbReference type="BioGRID" id="248194">
    <property type="interactions" value="10"/>
</dbReference>
<dbReference type="FunCoup" id="O35800">
    <property type="interactions" value="2041"/>
</dbReference>
<dbReference type="IntAct" id="O35800">
    <property type="interactions" value="1"/>
</dbReference>
<dbReference type="MINT" id="O35800"/>
<dbReference type="STRING" id="10116.ENSRNOP00000042230"/>
<dbReference type="PhosphoSitePlus" id="O35800"/>
<dbReference type="PaxDb" id="10116-ENSRNOP00000042230"/>
<dbReference type="GeneID" id="29560"/>
<dbReference type="KEGG" id="rno:29560"/>
<dbReference type="UCSC" id="RGD:61928">
    <property type="organism name" value="rat"/>
</dbReference>
<dbReference type="AGR" id="RGD:61928"/>
<dbReference type="CTD" id="3091"/>
<dbReference type="RGD" id="61928">
    <property type="gene designation" value="Hif1a"/>
</dbReference>
<dbReference type="eggNOG" id="KOG3558">
    <property type="taxonomic scope" value="Eukaryota"/>
</dbReference>
<dbReference type="InParanoid" id="O35800"/>
<dbReference type="Reactome" id="R-RNO-1234158">
    <property type="pathway name" value="Regulation of gene expression by Hypoxia-inducible Factor"/>
</dbReference>
<dbReference type="Reactome" id="R-RNO-1234174">
    <property type="pathway name" value="Cellular response to hypoxia"/>
</dbReference>
<dbReference type="Reactome" id="R-RNO-1234176">
    <property type="pathway name" value="Oxygen-dependent proline hydroxylation of Hypoxia-inducible Factor Alpha"/>
</dbReference>
<dbReference type="Reactome" id="R-RNO-5689880">
    <property type="pathway name" value="Ub-specific processing proteases"/>
</dbReference>
<dbReference type="Reactome" id="R-RNO-8857538">
    <property type="pathway name" value="PTK6 promotes HIF1A stabilization"/>
</dbReference>
<dbReference type="Reactome" id="R-RNO-8951664">
    <property type="pathway name" value="Neddylation"/>
</dbReference>
<dbReference type="PRO" id="PR:O35800"/>
<dbReference type="Proteomes" id="UP000002494">
    <property type="component" value="Unplaced"/>
</dbReference>
<dbReference type="GO" id="GO:1904115">
    <property type="term" value="C:axon cytoplasm"/>
    <property type="evidence" value="ECO:0007669"/>
    <property type="project" value="GOC"/>
</dbReference>
<dbReference type="GO" id="GO:0000785">
    <property type="term" value="C:chromatin"/>
    <property type="evidence" value="ECO:0000266"/>
    <property type="project" value="RGD"/>
</dbReference>
<dbReference type="GO" id="GO:0005737">
    <property type="term" value="C:cytoplasm"/>
    <property type="evidence" value="ECO:0000266"/>
    <property type="project" value="RGD"/>
</dbReference>
<dbReference type="GO" id="GO:0005829">
    <property type="term" value="C:cytosol"/>
    <property type="evidence" value="ECO:0000250"/>
    <property type="project" value="UniProtKB"/>
</dbReference>
<dbReference type="GO" id="GO:0000791">
    <property type="term" value="C:euchromatin"/>
    <property type="evidence" value="ECO:0000266"/>
    <property type="project" value="RGD"/>
</dbReference>
<dbReference type="GO" id="GO:0031514">
    <property type="term" value="C:motile cilium"/>
    <property type="evidence" value="ECO:0000266"/>
    <property type="project" value="RGD"/>
</dbReference>
<dbReference type="GO" id="GO:0016607">
    <property type="term" value="C:nuclear speck"/>
    <property type="evidence" value="ECO:0000250"/>
    <property type="project" value="UniProtKB"/>
</dbReference>
<dbReference type="GO" id="GO:0005634">
    <property type="term" value="C:nucleus"/>
    <property type="evidence" value="ECO:0000314"/>
    <property type="project" value="RGD"/>
</dbReference>
<dbReference type="GO" id="GO:0032991">
    <property type="term" value="C:protein-containing complex"/>
    <property type="evidence" value="ECO:0000266"/>
    <property type="project" value="RGD"/>
</dbReference>
<dbReference type="GO" id="GO:0090575">
    <property type="term" value="C:RNA polymerase II transcription regulator complex"/>
    <property type="evidence" value="ECO:0000266"/>
    <property type="project" value="RGD"/>
</dbReference>
<dbReference type="GO" id="GO:0000987">
    <property type="term" value="F:cis-regulatory region sequence-specific DNA binding"/>
    <property type="evidence" value="ECO:0000266"/>
    <property type="project" value="RGD"/>
</dbReference>
<dbReference type="GO" id="GO:0003677">
    <property type="term" value="F:DNA binding"/>
    <property type="evidence" value="ECO:0000266"/>
    <property type="project" value="RGD"/>
</dbReference>
<dbReference type="GO" id="GO:0001216">
    <property type="term" value="F:DNA-binding transcription activator activity"/>
    <property type="evidence" value="ECO:0000266"/>
    <property type="project" value="RGD"/>
</dbReference>
<dbReference type="GO" id="GO:0001228">
    <property type="term" value="F:DNA-binding transcription activator activity, RNA polymerase II-specific"/>
    <property type="evidence" value="ECO:0000266"/>
    <property type="project" value="RGD"/>
</dbReference>
<dbReference type="GO" id="GO:0003700">
    <property type="term" value="F:DNA-binding transcription factor activity"/>
    <property type="evidence" value="ECO:0000250"/>
    <property type="project" value="UniProtKB"/>
</dbReference>
<dbReference type="GO" id="GO:0000981">
    <property type="term" value="F:DNA-binding transcription factor activity, RNA polymerase II-specific"/>
    <property type="evidence" value="ECO:0000266"/>
    <property type="project" value="RGD"/>
</dbReference>
<dbReference type="GO" id="GO:0001217">
    <property type="term" value="F:DNA-binding transcription repressor activity"/>
    <property type="evidence" value="ECO:0000266"/>
    <property type="project" value="RGD"/>
</dbReference>
<dbReference type="GO" id="GO:0070888">
    <property type="term" value="F:E-box binding"/>
    <property type="evidence" value="ECO:0000266"/>
    <property type="project" value="RGD"/>
</dbReference>
<dbReference type="GO" id="GO:0019899">
    <property type="term" value="F:enzyme binding"/>
    <property type="evidence" value="ECO:0000266"/>
    <property type="project" value="RGD"/>
</dbReference>
<dbReference type="GO" id="GO:0042826">
    <property type="term" value="F:histone deacetylase binding"/>
    <property type="evidence" value="ECO:0000266"/>
    <property type="project" value="RGD"/>
</dbReference>
<dbReference type="GO" id="GO:0051879">
    <property type="term" value="F:Hsp90 protein binding"/>
    <property type="evidence" value="ECO:0000266"/>
    <property type="project" value="RGD"/>
</dbReference>
<dbReference type="GO" id="GO:0016922">
    <property type="term" value="F:nuclear receptor binding"/>
    <property type="evidence" value="ECO:0000266"/>
    <property type="project" value="RGD"/>
</dbReference>
<dbReference type="GO" id="GO:0002039">
    <property type="term" value="F:p53 binding"/>
    <property type="evidence" value="ECO:0000266"/>
    <property type="project" value="RGD"/>
</dbReference>
<dbReference type="GO" id="GO:0019904">
    <property type="term" value="F:protein domain specific binding"/>
    <property type="evidence" value="ECO:0000266"/>
    <property type="project" value="RGD"/>
</dbReference>
<dbReference type="GO" id="GO:0046982">
    <property type="term" value="F:protein heterodimerization activity"/>
    <property type="evidence" value="ECO:0000250"/>
    <property type="project" value="UniProtKB"/>
</dbReference>
<dbReference type="GO" id="GO:0019901">
    <property type="term" value="F:protein kinase binding"/>
    <property type="evidence" value="ECO:0000266"/>
    <property type="project" value="RGD"/>
</dbReference>
<dbReference type="GO" id="GO:0044877">
    <property type="term" value="F:protein-containing complex binding"/>
    <property type="evidence" value="ECO:0000314"/>
    <property type="project" value="RGD"/>
</dbReference>
<dbReference type="GO" id="GO:0000978">
    <property type="term" value="F:RNA polymerase II cis-regulatory region sequence-specific DNA binding"/>
    <property type="evidence" value="ECO:0000266"/>
    <property type="project" value="RGD"/>
</dbReference>
<dbReference type="GO" id="GO:0000977">
    <property type="term" value="F:RNA polymerase II transcription regulatory region sequence-specific DNA binding"/>
    <property type="evidence" value="ECO:0000266"/>
    <property type="project" value="RGD"/>
</dbReference>
<dbReference type="GO" id="GO:0061629">
    <property type="term" value="F:RNA polymerase II-specific DNA-binding transcription factor binding"/>
    <property type="evidence" value="ECO:0000266"/>
    <property type="project" value="RGD"/>
</dbReference>
<dbReference type="GO" id="GO:0043565">
    <property type="term" value="F:sequence-specific DNA binding"/>
    <property type="evidence" value="ECO:0000314"/>
    <property type="project" value="RGD"/>
</dbReference>
<dbReference type="GO" id="GO:0001223">
    <property type="term" value="F:transcription coactivator binding"/>
    <property type="evidence" value="ECO:0000250"/>
    <property type="project" value="UniProtKB"/>
</dbReference>
<dbReference type="GO" id="GO:0140537">
    <property type="term" value="F:transcription regulator activator activity"/>
    <property type="evidence" value="ECO:0000266"/>
    <property type="project" value="RGD"/>
</dbReference>
<dbReference type="GO" id="GO:0031625">
    <property type="term" value="F:ubiquitin protein ligase binding"/>
    <property type="evidence" value="ECO:0000353"/>
    <property type="project" value="RGD"/>
</dbReference>
<dbReference type="GO" id="GO:0006953">
    <property type="term" value="P:acute-phase response"/>
    <property type="evidence" value="ECO:0000270"/>
    <property type="project" value="RGD"/>
</dbReference>
<dbReference type="GO" id="GO:0001525">
    <property type="term" value="P:angiogenesis"/>
    <property type="evidence" value="ECO:0000266"/>
    <property type="project" value="RGD"/>
</dbReference>
<dbReference type="GO" id="GO:0006915">
    <property type="term" value="P:apoptotic process"/>
    <property type="evidence" value="ECO:0000266"/>
    <property type="project" value="RGD"/>
</dbReference>
<dbReference type="GO" id="GO:0019896">
    <property type="term" value="P:axonal transport of mitochondrion"/>
    <property type="evidence" value="ECO:0000250"/>
    <property type="project" value="UniProtKB"/>
</dbReference>
<dbReference type="GO" id="GO:0001922">
    <property type="term" value="P:B-1 B cell homeostasis"/>
    <property type="evidence" value="ECO:0000266"/>
    <property type="project" value="RGD"/>
</dbReference>
<dbReference type="GO" id="GO:0001568">
    <property type="term" value="P:blood vessel development"/>
    <property type="evidence" value="ECO:0000266"/>
    <property type="project" value="RGD"/>
</dbReference>
<dbReference type="GO" id="GO:0048514">
    <property type="term" value="P:blood vessel morphogenesis"/>
    <property type="evidence" value="ECO:0000266"/>
    <property type="project" value="RGD"/>
</dbReference>
<dbReference type="GO" id="GO:0030282">
    <property type="term" value="P:bone mineralization"/>
    <property type="evidence" value="ECO:0000266"/>
    <property type="project" value="RGD"/>
</dbReference>
<dbReference type="GO" id="GO:0048593">
    <property type="term" value="P:camera-type eye morphogenesis"/>
    <property type="evidence" value="ECO:0000266"/>
    <property type="project" value="RGD"/>
</dbReference>
<dbReference type="GO" id="GO:0003208">
    <property type="term" value="P:cardiac ventricle morphogenesis"/>
    <property type="evidence" value="ECO:0000266"/>
    <property type="project" value="RGD"/>
</dbReference>
<dbReference type="GO" id="GO:0051216">
    <property type="term" value="P:cartilage development"/>
    <property type="evidence" value="ECO:0000266"/>
    <property type="project" value="RGD"/>
</dbReference>
<dbReference type="GO" id="GO:0030154">
    <property type="term" value="P:cell differentiation"/>
    <property type="evidence" value="ECO:0000266"/>
    <property type="project" value="RGD"/>
</dbReference>
<dbReference type="GO" id="GO:0071454">
    <property type="term" value="P:cellular response to anoxia"/>
    <property type="evidence" value="ECO:0000270"/>
    <property type="project" value="RGD"/>
</dbReference>
<dbReference type="GO" id="GO:0071245">
    <property type="term" value="P:cellular response to carbon monoxide"/>
    <property type="evidence" value="ECO:0000270"/>
    <property type="project" value="RGD"/>
</dbReference>
<dbReference type="GO" id="GO:0071279">
    <property type="term" value="P:cellular response to cobalt ion"/>
    <property type="evidence" value="ECO:0000270"/>
    <property type="project" value="RGD"/>
</dbReference>
<dbReference type="GO" id="GO:1903928">
    <property type="term" value="P:cellular response to cyanide"/>
    <property type="evidence" value="ECO:0000270"/>
    <property type="project" value="RGD"/>
</dbReference>
<dbReference type="GO" id="GO:0071257">
    <property type="term" value="P:cellular response to electrical stimulus"/>
    <property type="evidence" value="ECO:0000270"/>
    <property type="project" value="RGD"/>
</dbReference>
<dbReference type="GO" id="GO:0071391">
    <property type="term" value="P:cellular response to estrogen stimulus"/>
    <property type="evidence" value="ECO:0000270"/>
    <property type="project" value="RGD"/>
</dbReference>
<dbReference type="GO" id="GO:0071333">
    <property type="term" value="P:cellular response to glucose stimulus"/>
    <property type="evidence" value="ECO:0000270"/>
    <property type="project" value="RGD"/>
</dbReference>
<dbReference type="GO" id="GO:0070301">
    <property type="term" value="P:cellular response to hydrogen peroxide"/>
    <property type="evidence" value="ECO:0000270"/>
    <property type="project" value="RGD"/>
</dbReference>
<dbReference type="GO" id="GO:0071456">
    <property type="term" value="P:cellular response to hypoxia"/>
    <property type="evidence" value="ECO:0000315"/>
    <property type="project" value="RGD"/>
</dbReference>
<dbReference type="GO" id="GO:0032869">
    <property type="term" value="P:cellular response to insulin stimulus"/>
    <property type="evidence" value="ECO:0000270"/>
    <property type="project" value="RGD"/>
</dbReference>
<dbReference type="GO" id="GO:0071347">
    <property type="term" value="P:cellular response to interleukin-1"/>
    <property type="evidence" value="ECO:0000270"/>
    <property type="project" value="RGD"/>
</dbReference>
<dbReference type="GO" id="GO:0071482">
    <property type="term" value="P:cellular response to light stimulus"/>
    <property type="evidence" value="ECO:0000270"/>
    <property type="project" value="RGD"/>
</dbReference>
<dbReference type="GO" id="GO:0071396">
    <property type="term" value="P:cellular response to lipid"/>
    <property type="evidence" value="ECO:0000270"/>
    <property type="project" value="RGD"/>
</dbReference>
<dbReference type="GO" id="GO:0071222">
    <property type="term" value="P:cellular response to lipopolysaccharide"/>
    <property type="evidence" value="ECO:0000270"/>
    <property type="project" value="RGD"/>
</dbReference>
<dbReference type="GO" id="GO:0071260">
    <property type="term" value="P:cellular response to mechanical stimulus"/>
    <property type="evidence" value="ECO:0000270"/>
    <property type="project" value="RGD"/>
</dbReference>
<dbReference type="GO" id="GO:0071250">
    <property type="term" value="P:cellular response to nitrite"/>
    <property type="evidence" value="ECO:0000270"/>
    <property type="project" value="RGD"/>
</dbReference>
<dbReference type="GO" id="GO:0034599">
    <property type="term" value="P:cellular response to oxidative stress"/>
    <property type="evidence" value="ECO:0000266"/>
    <property type="project" value="RGD"/>
</dbReference>
<dbReference type="GO" id="GO:1904628">
    <property type="term" value="P:cellular response to phorbol 13-acetate 12-myristate"/>
    <property type="evidence" value="ECO:0000270"/>
    <property type="project" value="RGD"/>
</dbReference>
<dbReference type="GO" id="GO:0097237">
    <property type="term" value="P:cellular response to toxic substance"/>
    <property type="evidence" value="ECO:0000270"/>
    <property type="project" value="RGD"/>
</dbReference>
<dbReference type="GO" id="GO:1904568">
    <property type="term" value="P:cellular response to wortmannin"/>
    <property type="evidence" value="ECO:0000270"/>
    <property type="project" value="RGD"/>
</dbReference>
<dbReference type="GO" id="GO:0071466">
    <property type="term" value="P:cellular response to xenobiotic stimulus"/>
    <property type="evidence" value="ECO:0000270"/>
    <property type="project" value="RGD"/>
</dbReference>
<dbReference type="GO" id="GO:0021987">
    <property type="term" value="P:cerebral cortex development"/>
    <property type="evidence" value="ECO:0000266"/>
    <property type="project" value="RGD"/>
</dbReference>
<dbReference type="GO" id="GO:0002062">
    <property type="term" value="P:chondrocyte differentiation"/>
    <property type="evidence" value="ECO:0000266"/>
    <property type="project" value="RGD"/>
</dbReference>
<dbReference type="GO" id="GO:0032963">
    <property type="term" value="P:collagen metabolic process"/>
    <property type="evidence" value="ECO:0000266"/>
    <property type="project" value="RGD"/>
</dbReference>
<dbReference type="GO" id="GO:0002248">
    <property type="term" value="P:connective tissue replacement involved in inflammatory response wound healing"/>
    <property type="evidence" value="ECO:0000266"/>
    <property type="project" value="RGD"/>
</dbReference>
<dbReference type="GO" id="GO:0048546">
    <property type="term" value="P:digestive tract morphogenesis"/>
    <property type="evidence" value="ECO:0000266"/>
    <property type="project" value="RGD"/>
</dbReference>
<dbReference type="GO" id="GO:0071542">
    <property type="term" value="P:dopaminergic neuron differentiation"/>
    <property type="evidence" value="ECO:0000266"/>
    <property type="project" value="RGD"/>
</dbReference>
<dbReference type="GO" id="GO:0051541">
    <property type="term" value="P:elastin metabolic process"/>
    <property type="evidence" value="ECO:0000266"/>
    <property type="project" value="RGD"/>
</dbReference>
<dbReference type="GO" id="GO:0035162">
    <property type="term" value="P:embryonic hemopoiesis"/>
    <property type="evidence" value="ECO:0000266"/>
    <property type="project" value="RGD"/>
</dbReference>
<dbReference type="GO" id="GO:0001892">
    <property type="term" value="P:embryonic placenta development"/>
    <property type="evidence" value="ECO:0000266"/>
    <property type="project" value="RGD"/>
</dbReference>
<dbReference type="GO" id="GO:0061030">
    <property type="term" value="P:epithelial cell differentiation involved in mammary gland alveolus development"/>
    <property type="evidence" value="ECO:0000266"/>
    <property type="project" value="RGD"/>
</dbReference>
<dbReference type="GO" id="GO:0001837">
    <property type="term" value="P:epithelial to mesenchymal transition"/>
    <property type="evidence" value="ECO:0000266"/>
    <property type="project" value="RGD"/>
</dbReference>
<dbReference type="GO" id="GO:0002067">
    <property type="term" value="P:glandular epithelial cell differentiation"/>
    <property type="evidence" value="ECO:0000266"/>
    <property type="project" value="RGD"/>
</dbReference>
<dbReference type="GO" id="GO:0002071">
    <property type="term" value="P:glandular epithelial cell maturation"/>
    <property type="evidence" value="ECO:0000266"/>
    <property type="project" value="RGD"/>
</dbReference>
<dbReference type="GO" id="GO:0042593">
    <property type="term" value="P:glucose homeostasis"/>
    <property type="evidence" value="ECO:0000266"/>
    <property type="project" value="RGD"/>
</dbReference>
<dbReference type="GO" id="GO:0007507">
    <property type="term" value="P:heart development"/>
    <property type="evidence" value="ECO:0000270"/>
    <property type="project" value="RGD"/>
</dbReference>
<dbReference type="GO" id="GO:0001947">
    <property type="term" value="P:heart looping"/>
    <property type="evidence" value="ECO:0000266"/>
    <property type="project" value="RGD"/>
</dbReference>
<dbReference type="GO" id="GO:0042541">
    <property type="term" value="P:hemoglobin biosynthetic process"/>
    <property type="evidence" value="ECO:0000266"/>
    <property type="project" value="RGD"/>
</dbReference>
<dbReference type="GO" id="GO:0097411">
    <property type="term" value="P:hypoxia-inducible factor-1alpha signaling pathway"/>
    <property type="evidence" value="ECO:0000266"/>
    <property type="project" value="RGD"/>
</dbReference>
<dbReference type="GO" id="GO:0035773">
    <property type="term" value="P:insulin secretion involved in cellular response to glucose stimulus"/>
    <property type="evidence" value="ECO:0000266"/>
    <property type="project" value="RGD"/>
</dbReference>
<dbReference type="GO" id="GO:0060574">
    <property type="term" value="P:intestinal epithelial cell maturation"/>
    <property type="evidence" value="ECO:0000266"/>
    <property type="project" value="RGD"/>
</dbReference>
<dbReference type="GO" id="GO:0001678">
    <property type="term" value="P:intracellular glucose homeostasis"/>
    <property type="evidence" value="ECO:0000250"/>
    <property type="project" value="UniProtKB"/>
</dbReference>
<dbReference type="GO" id="GO:0006879">
    <property type="term" value="P:intracellular iron ion homeostasis"/>
    <property type="evidence" value="ECO:0000266"/>
    <property type="project" value="RGD"/>
</dbReference>
<dbReference type="GO" id="GO:0032364">
    <property type="term" value="P:intracellular oxygen homeostasis"/>
    <property type="evidence" value="ECO:0000266"/>
    <property type="project" value="RGD"/>
</dbReference>
<dbReference type="GO" id="GO:0061072">
    <property type="term" value="P:iris morphogenesis"/>
    <property type="evidence" value="ECO:0000266"/>
    <property type="project" value="RGD"/>
</dbReference>
<dbReference type="GO" id="GO:0048250">
    <property type="term" value="P:iron import into the mitochondrion"/>
    <property type="evidence" value="ECO:0000315"/>
    <property type="project" value="RGD"/>
</dbReference>
<dbReference type="GO" id="GO:0006089">
    <property type="term" value="P:lactate metabolic process"/>
    <property type="evidence" value="ECO:0000266"/>
    <property type="project" value="RGD"/>
</dbReference>
<dbReference type="GO" id="GO:0007595">
    <property type="term" value="P:lactation"/>
    <property type="evidence" value="ECO:0000266"/>
    <property type="project" value="RGD"/>
</dbReference>
<dbReference type="GO" id="GO:0030324">
    <property type="term" value="P:lung development"/>
    <property type="evidence" value="ECO:0000270"/>
    <property type="project" value="RGD"/>
</dbReference>
<dbReference type="GO" id="GO:0060135">
    <property type="term" value="P:maternal process involved in female pregnancy"/>
    <property type="evidence" value="ECO:0000270"/>
    <property type="project" value="RGD"/>
</dbReference>
<dbReference type="GO" id="GO:0097152">
    <property type="term" value="P:mesenchymal cell apoptotic process"/>
    <property type="evidence" value="ECO:0000266"/>
    <property type="project" value="RGD"/>
</dbReference>
<dbReference type="GO" id="GO:0046716">
    <property type="term" value="P:muscle cell cellular homeostasis"/>
    <property type="evidence" value="ECO:0000266"/>
    <property type="project" value="RGD"/>
</dbReference>
<dbReference type="GO" id="GO:0043066">
    <property type="term" value="P:negative regulation of apoptotic process"/>
    <property type="evidence" value="ECO:0000315"/>
    <property type="project" value="RGD"/>
</dbReference>
<dbReference type="GO" id="GO:0030502">
    <property type="term" value="P:negative regulation of bone mineralization"/>
    <property type="evidence" value="ECO:0000266"/>
    <property type="project" value="RGD"/>
</dbReference>
<dbReference type="GO" id="GO:0010629">
    <property type="term" value="P:negative regulation of gene expression"/>
    <property type="evidence" value="ECO:0000266"/>
    <property type="project" value="RGD"/>
</dbReference>
<dbReference type="GO" id="GO:0045926">
    <property type="term" value="P:negative regulation of growth"/>
    <property type="evidence" value="ECO:0000266"/>
    <property type="project" value="RGD"/>
</dbReference>
<dbReference type="GO" id="GO:2001054">
    <property type="term" value="P:negative regulation of mesenchymal cell apoptotic process"/>
    <property type="evidence" value="ECO:0000266"/>
    <property type="project" value="RGD"/>
</dbReference>
<dbReference type="GO" id="GO:1902894">
    <property type="term" value="P:negative regulation of miRNA transcription"/>
    <property type="evidence" value="ECO:0000266"/>
    <property type="project" value="RGD"/>
</dbReference>
<dbReference type="GO" id="GO:0043524">
    <property type="term" value="P:negative regulation of neuron apoptotic process"/>
    <property type="evidence" value="ECO:0000266"/>
    <property type="project" value="RGD"/>
</dbReference>
<dbReference type="GO" id="GO:0030279">
    <property type="term" value="P:negative regulation of ossification"/>
    <property type="evidence" value="ECO:0000266"/>
    <property type="project" value="RGD"/>
</dbReference>
<dbReference type="GO" id="GO:1903377">
    <property type="term" value="P:negative regulation of oxidative stress-induced neuron intrinsic apoptotic signaling pathway"/>
    <property type="evidence" value="ECO:0000266"/>
    <property type="project" value="RGD"/>
</dbReference>
<dbReference type="GO" id="GO:1903427">
    <property type="term" value="P:negative regulation of reactive oxygen species biosynthetic process"/>
    <property type="evidence" value="ECO:0000315"/>
    <property type="project" value="RGD"/>
</dbReference>
<dbReference type="GO" id="GO:0070244">
    <property type="term" value="P:negative regulation of thymocyte apoptotic process"/>
    <property type="evidence" value="ECO:0000266"/>
    <property type="project" value="RGD"/>
</dbReference>
<dbReference type="GO" id="GO:0032007">
    <property type="term" value="P:negative regulation of TOR signaling"/>
    <property type="evidence" value="ECO:0000266"/>
    <property type="project" value="RGD"/>
</dbReference>
<dbReference type="GO" id="GO:0000122">
    <property type="term" value="P:negative regulation of transcription by RNA polymerase II"/>
    <property type="evidence" value="ECO:0000315"/>
    <property type="project" value="RGD"/>
</dbReference>
<dbReference type="GO" id="GO:0045906">
    <property type="term" value="P:negative regulation of vasoconstriction"/>
    <property type="evidence" value="ECO:0000315"/>
    <property type="project" value="RGD"/>
</dbReference>
<dbReference type="GO" id="GO:0001755">
    <property type="term" value="P:neural crest cell migration"/>
    <property type="evidence" value="ECO:0000266"/>
    <property type="project" value="RGD"/>
</dbReference>
<dbReference type="GO" id="GO:0021502">
    <property type="term" value="P:neural fold elevation formation"/>
    <property type="evidence" value="ECO:0000266"/>
    <property type="project" value="RGD"/>
</dbReference>
<dbReference type="GO" id="GO:0007405">
    <property type="term" value="P:neuroblast proliferation"/>
    <property type="evidence" value="ECO:0000266"/>
    <property type="project" value="RGD"/>
</dbReference>
<dbReference type="GO" id="GO:0051402">
    <property type="term" value="P:neuron apoptotic process"/>
    <property type="evidence" value="ECO:0000266"/>
    <property type="project" value="RGD"/>
</dbReference>
<dbReference type="GO" id="GO:0003151">
    <property type="term" value="P:outflow tract morphogenesis"/>
    <property type="evidence" value="ECO:0000266"/>
    <property type="project" value="RGD"/>
</dbReference>
<dbReference type="GO" id="GO:0045766">
    <property type="term" value="P:positive regulation of angiogenesis"/>
    <property type="evidence" value="ECO:0000266"/>
    <property type="project" value="RGD"/>
</dbReference>
<dbReference type="GO" id="GO:0043065">
    <property type="term" value="P:positive regulation of apoptotic process"/>
    <property type="evidence" value="ECO:0000315"/>
    <property type="project" value="RGD"/>
</dbReference>
<dbReference type="GO" id="GO:0043536">
    <property type="term" value="P:positive regulation of blood vessel endothelial cell migration"/>
    <property type="evidence" value="ECO:0000266"/>
    <property type="project" value="RGD"/>
</dbReference>
<dbReference type="GO" id="GO:0008284">
    <property type="term" value="P:positive regulation of cell population proliferation"/>
    <property type="evidence" value="ECO:0000315"/>
    <property type="project" value="RGD"/>
</dbReference>
<dbReference type="GO" id="GO:0045793">
    <property type="term" value="P:positive regulation of cell size"/>
    <property type="evidence" value="ECO:0000270"/>
    <property type="project" value="RGD"/>
</dbReference>
<dbReference type="GO" id="GO:0070101">
    <property type="term" value="P:positive regulation of chemokine-mediated signaling pathway"/>
    <property type="evidence" value="ECO:0000266"/>
    <property type="project" value="RGD"/>
</dbReference>
<dbReference type="GO" id="GO:1900017">
    <property type="term" value="P:positive regulation of cytokine production involved in inflammatory response"/>
    <property type="evidence" value="ECO:0000250"/>
    <property type="project" value="UniProtKB"/>
</dbReference>
<dbReference type="GO" id="GO:0045893">
    <property type="term" value="P:positive regulation of DNA-templated transcription"/>
    <property type="evidence" value="ECO:0000250"/>
    <property type="project" value="UniProtKB"/>
</dbReference>
<dbReference type="GO" id="GO:0010595">
    <property type="term" value="P:positive regulation of endothelial cell migration"/>
    <property type="evidence" value="ECO:0000315"/>
    <property type="project" value="RGD"/>
</dbReference>
<dbReference type="GO" id="GO:0010634">
    <property type="term" value="P:positive regulation of epithelial cell migration"/>
    <property type="evidence" value="ECO:0000266"/>
    <property type="project" value="RGD"/>
</dbReference>
<dbReference type="GO" id="GO:0045648">
    <property type="term" value="P:positive regulation of erythrocyte differentiation"/>
    <property type="evidence" value="ECO:0000266"/>
    <property type="project" value="RGD"/>
</dbReference>
<dbReference type="GO" id="GO:0010628">
    <property type="term" value="P:positive regulation of gene expression"/>
    <property type="evidence" value="ECO:0000315"/>
    <property type="project" value="RGD"/>
</dbReference>
<dbReference type="GO" id="GO:0045722">
    <property type="term" value="P:positive regulation of gluconeogenesis"/>
    <property type="evidence" value="ECO:0000315"/>
    <property type="project" value="RGD"/>
</dbReference>
<dbReference type="GO" id="GO:0045821">
    <property type="term" value="P:positive regulation of glycolytic process"/>
    <property type="evidence" value="ECO:0000266"/>
    <property type="project" value="RGD"/>
</dbReference>
<dbReference type="GO" id="GO:0046886">
    <property type="term" value="P:positive regulation of hormone biosynthetic process"/>
    <property type="evidence" value="ECO:0000266"/>
    <property type="project" value="RGD"/>
</dbReference>
<dbReference type="GO" id="GO:0035774">
    <property type="term" value="P:positive regulation of insulin secretion involved in cellular response to glucose stimulus"/>
    <property type="evidence" value="ECO:0000266"/>
    <property type="project" value="RGD"/>
</dbReference>
<dbReference type="GO" id="GO:0016239">
    <property type="term" value="P:positive regulation of macroautophagy"/>
    <property type="evidence" value="ECO:0000266"/>
    <property type="project" value="RGD"/>
</dbReference>
<dbReference type="GO" id="GO:1902895">
    <property type="term" value="P:positive regulation of miRNA transcription"/>
    <property type="evidence" value="ECO:0000266"/>
    <property type="project" value="RGD"/>
</dbReference>
<dbReference type="GO" id="GO:0002052">
    <property type="term" value="P:positive regulation of neuroblast proliferation"/>
    <property type="evidence" value="ECO:0000266"/>
    <property type="project" value="RGD"/>
</dbReference>
<dbReference type="GO" id="GO:0048661">
    <property type="term" value="P:positive regulation of smooth muscle cell proliferation"/>
    <property type="evidence" value="ECO:0000315"/>
    <property type="project" value="RGD"/>
</dbReference>
<dbReference type="GO" id="GO:1903672">
    <property type="term" value="P:positive regulation of sprouting angiogenesis"/>
    <property type="evidence" value="ECO:0000315"/>
    <property type="project" value="RGD"/>
</dbReference>
<dbReference type="GO" id="GO:0062029">
    <property type="term" value="P:positive regulation of stress granule assembly"/>
    <property type="evidence" value="ECO:0000315"/>
    <property type="project" value="RGD"/>
</dbReference>
<dbReference type="GO" id="GO:0045944">
    <property type="term" value="P:positive regulation of transcription by RNA polymerase II"/>
    <property type="evidence" value="ECO:0000314"/>
    <property type="project" value="RGD"/>
</dbReference>
<dbReference type="GO" id="GO:0010575">
    <property type="term" value="P:positive regulation of vascular endothelial growth factor production"/>
    <property type="evidence" value="ECO:0000315"/>
    <property type="project" value="RGD"/>
</dbReference>
<dbReference type="GO" id="GO:0030949">
    <property type="term" value="P:positive regulation of vascular endothelial growth factor receptor signaling pathway"/>
    <property type="evidence" value="ECO:0000266"/>
    <property type="project" value="RGD"/>
</dbReference>
<dbReference type="GO" id="GO:0035470">
    <property type="term" value="P:positive regulation of vascular wound healing"/>
    <property type="evidence" value="ECO:0000315"/>
    <property type="project" value="RGD"/>
</dbReference>
<dbReference type="GO" id="GO:0042127">
    <property type="term" value="P:regulation of cell population proliferation"/>
    <property type="evidence" value="ECO:0000266"/>
    <property type="project" value="RGD"/>
</dbReference>
<dbReference type="GO" id="GO:1900037">
    <property type="term" value="P:regulation of cellular response to hypoxia"/>
    <property type="evidence" value="ECO:0000270"/>
    <property type="project" value="RGD"/>
</dbReference>
<dbReference type="GO" id="GO:0006355">
    <property type="term" value="P:regulation of DNA-templated transcription"/>
    <property type="evidence" value="ECO:0000266"/>
    <property type="project" value="RGD"/>
</dbReference>
<dbReference type="GO" id="GO:0010468">
    <property type="term" value="P:regulation of gene expression"/>
    <property type="evidence" value="ECO:0000266"/>
    <property type="project" value="RGD"/>
</dbReference>
<dbReference type="GO" id="GO:0006110">
    <property type="term" value="P:regulation of glycolytic process"/>
    <property type="evidence" value="ECO:0000250"/>
    <property type="project" value="UniProtKB"/>
</dbReference>
<dbReference type="GO" id="GO:2000434">
    <property type="term" value="P:regulation of protein neddylation"/>
    <property type="evidence" value="ECO:0000250"/>
    <property type="project" value="UniProtKB"/>
</dbReference>
<dbReference type="GO" id="GO:0070243">
    <property type="term" value="P:regulation of thymocyte apoptotic process"/>
    <property type="evidence" value="ECO:0000266"/>
    <property type="project" value="RGD"/>
</dbReference>
<dbReference type="GO" id="GO:0006357">
    <property type="term" value="P:regulation of transcription by RNA polymerase II"/>
    <property type="evidence" value="ECO:0000266"/>
    <property type="project" value="RGD"/>
</dbReference>
<dbReference type="GO" id="GO:0032909">
    <property type="term" value="P:regulation of transforming growth factor beta2 production"/>
    <property type="evidence" value="ECO:0000266"/>
    <property type="project" value="RGD"/>
</dbReference>
<dbReference type="GO" id="GO:0014823">
    <property type="term" value="P:response to activity"/>
    <property type="evidence" value="ECO:0000270"/>
    <property type="project" value="RGD"/>
</dbReference>
<dbReference type="GO" id="GO:0043279">
    <property type="term" value="P:response to alkaloid"/>
    <property type="evidence" value="ECO:0000270"/>
    <property type="project" value="RGD"/>
</dbReference>
<dbReference type="GO" id="GO:0072347">
    <property type="term" value="P:response to anesthetic"/>
    <property type="evidence" value="ECO:0000270"/>
    <property type="project" value="RGD"/>
</dbReference>
<dbReference type="GO" id="GO:0010996">
    <property type="term" value="P:response to auditory stimulus"/>
    <property type="evidence" value="ECO:0000270"/>
    <property type="project" value="RGD"/>
</dbReference>
<dbReference type="GO" id="GO:0032025">
    <property type="term" value="P:response to cobalt ion"/>
    <property type="evidence" value="ECO:0000270"/>
    <property type="project" value="RGD"/>
</dbReference>
<dbReference type="GO" id="GO:0032355">
    <property type="term" value="P:response to estradiol"/>
    <property type="evidence" value="ECO:0000270"/>
    <property type="project" value="RGD"/>
</dbReference>
<dbReference type="GO" id="GO:0043627">
    <property type="term" value="P:response to estrogen"/>
    <property type="evidence" value="ECO:0000270"/>
    <property type="project" value="RGD"/>
</dbReference>
<dbReference type="GO" id="GO:0060992">
    <property type="term" value="P:response to fungicide"/>
    <property type="evidence" value="ECO:0000315"/>
    <property type="project" value="RGD"/>
</dbReference>
<dbReference type="GO" id="GO:0051384">
    <property type="term" value="P:response to glucocorticoid"/>
    <property type="evidence" value="ECO:0000270"/>
    <property type="project" value="RGD"/>
</dbReference>
<dbReference type="GO" id="GO:0009749">
    <property type="term" value="P:response to glucose"/>
    <property type="evidence" value="ECO:0000270"/>
    <property type="project" value="RGD"/>
</dbReference>
<dbReference type="GO" id="GO:0001666">
    <property type="term" value="P:response to hypoxia"/>
    <property type="evidence" value="ECO:0000314"/>
    <property type="project" value="RGD"/>
</dbReference>
<dbReference type="GO" id="GO:0010039">
    <property type="term" value="P:response to iron ion"/>
    <property type="evidence" value="ECO:0000266"/>
    <property type="project" value="RGD"/>
</dbReference>
<dbReference type="GO" id="GO:0009612">
    <property type="term" value="P:response to mechanical stimulus"/>
    <property type="evidence" value="ECO:0000270"/>
    <property type="project" value="RGD"/>
</dbReference>
<dbReference type="GO" id="GO:0014850">
    <property type="term" value="P:response to muscle activity"/>
    <property type="evidence" value="ECO:0000266"/>
    <property type="project" value="RGD"/>
</dbReference>
<dbReference type="GO" id="GO:0014074">
    <property type="term" value="P:response to purine-containing compound"/>
    <property type="evidence" value="ECO:0000270"/>
    <property type="project" value="RGD"/>
</dbReference>
<dbReference type="GO" id="GO:0000302">
    <property type="term" value="P:response to reactive oxygen species"/>
    <property type="evidence" value="ECO:0000250"/>
    <property type="project" value="UniProtKB"/>
</dbReference>
<dbReference type="GO" id="GO:0009651">
    <property type="term" value="P:response to salt stress"/>
    <property type="evidence" value="ECO:0000270"/>
    <property type="project" value="RGD"/>
</dbReference>
<dbReference type="GO" id="GO:0010165">
    <property type="term" value="P:response to X-ray"/>
    <property type="evidence" value="ECO:0000270"/>
    <property type="project" value="RGD"/>
</dbReference>
<dbReference type="GO" id="GO:0009410">
    <property type="term" value="P:response to xenobiotic stimulus"/>
    <property type="evidence" value="ECO:0000270"/>
    <property type="project" value="RGD"/>
</dbReference>
<dbReference type="GO" id="GO:0061298">
    <property type="term" value="P:retina vasculature development in camera-type eye"/>
    <property type="evidence" value="ECO:0000266"/>
    <property type="project" value="RGD"/>
</dbReference>
<dbReference type="GO" id="GO:0007165">
    <property type="term" value="P:signal transduction"/>
    <property type="evidence" value="ECO:0000266"/>
    <property type="project" value="RGD"/>
</dbReference>
<dbReference type="GO" id="GO:0048771">
    <property type="term" value="P:tissue remodeling"/>
    <property type="evidence" value="ECO:0000270"/>
    <property type="project" value="RGD"/>
</dbReference>
<dbReference type="GO" id="GO:0031929">
    <property type="term" value="P:TOR signaling"/>
    <property type="evidence" value="ECO:0000266"/>
    <property type="project" value="RGD"/>
</dbReference>
<dbReference type="GO" id="GO:0010573">
    <property type="term" value="P:vascular endothelial growth factor production"/>
    <property type="evidence" value="ECO:0000266"/>
    <property type="project" value="RGD"/>
</dbReference>
<dbReference type="GO" id="GO:0001944">
    <property type="term" value="P:vasculature development"/>
    <property type="evidence" value="ECO:0000266"/>
    <property type="project" value="RGD"/>
</dbReference>
<dbReference type="GO" id="GO:0008542">
    <property type="term" value="P:visual learning"/>
    <property type="evidence" value="ECO:0000266"/>
    <property type="project" value="RGD"/>
</dbReference>
<dbReference type="CDD" id="cd19727">
    <property type="entry name" value="bHLH-PAS_HIF1a_PASD8"/>
    <property type="match status" value="1"/>
</dbReference>
<dbReference type="CDD" id="cd00130">
    <property type="entry name" value="PAS"/>
    <property type="match status" value="2"/>
</dbReference>
<dbReference type="FunFam" id="3.30.450.20:FF:000005">
    <property type="entry name" value="Hypoxia-inducible factor 1 subunit alpha"/>
    <property type="match status" value="1"/>
</dbReference>
<dbReference type="FunFam" id="3.30.450.20:FF:000015">
    <property type="entry name" value="Hypoxia-inducible factor 1-alpha isoform 1"/>
    <property type="match status" value="1"/>
</dbReference>
<dbReference type="FunFam" id="4.10.280.10:FF:000076">
    <property type="entry name" value="hypoxia-inducible factor 3-alpha isoform X1"/>
    <property type="match status" value="1"/>
</dbReference>
<dbReference type="Gene3D" id="4.10.280.10">
    <property type="entry name" value="Helix-loop-helix DNA-binding domain"/>
    <property type="match status" value="1"/>
</dbReference>
<dbReference type="Gene3D" id="3.30.450.20">
    <property type="entry name" value="PAS domain"/>
    <property type="match status" value="2"/>
</dbReference>
<dbReference type="InterPro" id="IPR011598">
    <property type="entry name" value="bHLH_dom"/>
</dbReference>
<dbReference type="InterPro" id="IPR001321">
    <property type="entry name" value="HIF-1_alpha"/>
</dbReference>
<dbReference type="InterPro" id="IPR014887">
    <property type="entry name" value="HIF-1_CTAD"/>
</dbReference>
<dbReference type="InterPro" id="IPR021537">
    <property type="entry name" value="HIF_alpha-like"/>
</dbReference>
<dbReference type="InterPro" id="IPR036638">
    <property type="entry name" value="HLH_DNA-bd_sf"/>
</dbReference>
<dbReference type="InterPro" id="IPR001610">
    <property type="entry name" value="PAC"/>
</dbReference>
<dbReference type="InterPro" id="IPR000014">
    <property type="entry name" value="PAS"/>
</dbReference>
<dbReference type="InterPro" id="IPR035965">
    <property type="entry name" value="PAS-like_dom_sf"/>
</dbReference>
<dbReference type="InterPro" id="IPR013655">
    <property type="entry name" value="PAS_fold_3"/>
</dbReference>
<dbReference type="NCBIfam" id="TIGR00229">
    <property type="entry name" value="sensory_box"/>
    <property type="match status" value="2"/>
</dbReference>
<dbReference type="PANTHER" id="PTHR23043">
    <property type="entry name" value="HYPOXIA-INDUCIBLE FACTOR 1 ALPHA"/>
    <property type="match status" value="1"/>
</dbReference>
<dbReference type="PANTHER" id="PTHR23043:SF7">
    <property type="entry name" value="HYPOXIA-INDUCIBLE FACTOR 1-ALPHA"/>
    <property type="match status" value="1"/>
</dbReference>
<dbReference type="Pfam" id="PF23171">
    <property type="entry name" value="bHLH_HIF1A"/>
    <property type="match status" value="1"/>
</dbReference>
<dbReference type="Pfam" id="PF11413">
    <property type="entry name" value="HIF-1"/>
    <property type="match status" value="1"/>
</dbReference>
<dbReference type="Pfam" id="PF08778">
    <property type="entry name" value="HIF-1a_CTAD"/>
    <property type="match status" value="1"/>
</dbReference>
<dbReference type="Pfam" id="PF08447">
    <property type="entry name" value="PAS_3"/>
    <property type="match status" value="1"/>
</dbReference>
<dbReference type="Pfam" id="PF13426">
    <property type="entry name" value="PAS_9"/>
    <property type="match status" value="1"/>
</dbReference>
<dbReference type="PRINTS" id="PR01080">
    <property type="entry name" value="HYPOXIAIF1A"/>
</dbReference>
<dbReference type="SMART" id="SM00353">
    <property type="entry name" value="HLH"/>
    <property type="match status" value="1"/>
</dbReference>
<dbReference type="SMART" id="SM00086">
    <property type="entry name" value="PAC"/>
    <property type="match status" value="1"/>
</dbReference>
<dbReference type="SMART" id="SM00091">
    <property type="entry name" value="PAS"/>
    <property type="match status" value="2"/>
</dbReference>
<dbReference type="SUPFAM" id="SSF47459">
    <property type="entry name" value="HLH, helix-loop-helix DNA-binding domain"/>
    <property type="match status" value="1"/>
</dbReference>
<dbReference type="SUPFAM" id="SSF55785">
    <property type="entry name" value="PYP-like sensor domain (PAS domain)"/>
    <property type="match status" value="2"/>
</dbReference>
<dbReference type="PROSITE" id="PS50888">
    <property type="entry name" value="BHLH"/>
    <property type="match status" value="1"/>
</dbReference>
<dbReference type="PROSITE" id="PS50112">
    <property type="entry name" value="PAS"/>
    <property type="match status" value="2"/>
</dbReference>
<accession>O35800</accession>
<accession>Q9WTU9</accession>
<organism>
    <name type="scientific">Rattus norvegicus</name>
    <name type="common">Rat</name>
    <dbReference type="NCBI Taxonomy" id="10116"/>
    <lineage>
        <taxon>Eukaryota</taxon>
        <taxon>Metazoa</taxon>
        <taxon>Chordata</taxon>
        <taxon>Craniata</taxon>
        <taxon>Vertebrata</taxon>
        <taxon>Euteleostomi</taxon>
        <taxon>Mammalia</taxon>
        <taxon>Eutheria</taxon>
        <taxon>Euarchontoglires</taxon>
        <taxon>Glires</taxon>
        <taxon>Rodentia</taxon>
        <taxon>Myomorpha</taxon>
        <taxon>Muroidea</taxon>
        <taxon>Muridae</taxon>
        <taxon>Murinae</taxon>
        <taxon>Rattus</taxon>
    </lineage>
</organism>
<protein>
    <recommendedName>
        <fullName>Hypoxia-inducible factor 1-alpha</fullName>
        <shortName>HIF-1-alpha</shortName>
        <shortName>HIF1-alpha</shortName>
    </recommendedName>
</protein>
<feature type="chain" id="PRO_0000127222" description="Hypoxia-inducible factor 1-alpha">
    <location>
        <begin position="1"/>
        <end position="825"/>
    </location>
</feature>
<feature type="domain" description="bHLH" evidence="5">
    <location>
        <begin position="17"/>
        <end position="70"/>
    </location>
</feature>
<feature type="domain" description="PAS 1" evidence="4">
    <location>
        <begin position="85"/>
        <end position="158"/>
    </location>
</feature>
<feature type="domain" description="PAS 2" evidence="4">
    <location>
        <begin position="228"/>
        <end position="298"/>
    </location>
</feature>
<feature type="domain" description="PAC">
    <location>
        <begin position="302"/>
        <end position="345"/>
    </location>
</feature>
<feature type="region of interest" description="Interaction with TSGA10" evidence="2">
    <location>
        <begin position="1"/>
        <end position="401"/>
    </location>
</feature>
<feature type="region of interest" description="Disordered" evidence="6">
    <location>
        <begin position="1"/>
        <end position="30"/>
    </location>
</feature>
<feature type="region of interest" description="DNA-binding" evidence="2">
    <location>
        <begin position="21"/>
        <end position="30"/>
    </location>
</feature>
<feature type="region of interest" description="Required for heterodimer formation with ARNT" evidence="2">
    <location>
        <begin position="170"/>
        <end position="191"/>
    </location>
</feature>
<feature type="region of interest" description="ODD">
    <location>
        <begin position="401"/>
        <end position="602"/>
    </location>
</feature>
<feature type="region of interest" description="Disordered" evidence="6">
    <location>
        <begin position="492"/>
        <end position="520"/>
    </location>
</feature>
<feature type="region of interest" description="NTAD">
    <location>
        <begin position="530"/>
        <end position="574"/>
    </location>
</feature>
<feature type="region of interest" description="ID">
    <location>
        <begin position="575"/>
        <end position="784"/>
    </location>
</feature>
<feature type="region of interest" description="Disordered" evidence="6">
    <location>
        <begin position="579"/>
        <end position="602"/>
    </location>
</feature>
<feature type="region of interest" description="Disordered" evidence="6">
    <location>
        <begin position="654"/>
        <end position="674"/>
    </location>
</feature>
<feature type="region of interest" description="CTAD">
    <location>
        <begin position="785"/>
        <end position="825"/>
    </location>
</feature>
<feature type="short sequence motif" description="Nuclear localization signal" evidence="3">
    <location>
        <begin position="717"/>
        <end position="721"/>
    </location>
</feature>
<feature type="compositionally biased region" description="Basic and acidic residues" evidence="6">
    <location>
        <begin position="7"/>
        <end position="30"/>
    </location>
</feature>
<feature type="compositionally biased region" description="Polar residues" evidence="6">
    <location>
        <begin position="492"/>
        <end position="516"/>
    </location>
</feature>
<feature type="compositionally biased region" description="Polar residues" evidence="6">
    <location>
        <begin position="654"/>
        <end position="667"/>
    </location>
</feature>
<feature type="modified residue" description="Phosphoserine; by CK1" evidence="1">
    <location>
        <position position="247"/>
    </location>
</feature>
<feature type="modified residue" description="4-hydroxyproline" evidence="1">
    <location>
        <position position="402"/>
    </location>
</feature>
<feature type="modified residue" description="N6-acetyllysine; alternate" evidence="1">
    <location>
        <position position="531"/>
    </location>
</feature>
<feature type="modified residue" description="Phosphoserine; by GSK3-beta" evidence="1">
    <location>
        <position position="550"/>
    </location>
</feature>
<feature type="modified residue" description="Phosphothreonine; by GSK3-beta" evidence="1">
    <location>
        <position position="554"/>
    </location>
</feature>
<feature type="modified residue" description="4-hydroxyproline" evidence="1">
    <location>
        <position position="563"/>
    </location>
</feature>
<feature type="modified residue" description="Phosphoserine; by PLK3" evidence="1">
    <location>
        <position position="575"/>
    </location>
</feature>
<feature type="modified residue" description="Phosphoserine; by GSK3-beta" evidence="1">
    <location>
        <position position="588"/>
    </location>
</feature>
<feature type="modified residue" description="Phosphoserine; by PLK3" evidence="1">
    <location>
        <position position="657"/>
    </location>
</feature>
<feature type="modified residue" description="S-nitrosocysteine" evidence="1">
    <location>
        <position position="799"/>
    </location>
</feature>
<feature type="modified residue" description="(3S)-3-hydroxyasparagine" evidence="1">
    <location>
        <position position="802"/>
    </location>
</feature>
<feature type="cross-link" description="Glycyl lysine isopeptide (Lys-Gly) (interchain with G-Cter in ubiquitin); alternate" evidence="1">
    <location>
        <position position="531"/>
    </location>
</feature>
<feature type="cross-link" description="Glycyl lysine isopeptide (Lys-Gly) (interchain with G-Cter in ubiquitin)" evidence="1">
    <location>
        <position position="537"/>
    </location>
</feature>
<feature type="cross-link" description="Glycyl lysine isopeptide (Lys-Gly) (interchain with G-Cter in ubiquitin)" evidence="1">
    <location>
        <position position="546"/>
    </location>
</feature>
<feature type="sequence conflict" description="In Ref. 2; AAD24413." evidence="7" ref="2">
    <original>K</original>
    <variation>NR</variation>
    <location>
        <position position="12"/>
    </location>
</feature>
<feature type="sequence conflict" description="In Ref. 2; AAD24413." evidence="7" ref="2">
    <original>D</original>
    <variation>G</variation>
    <location>
        <position position="74"/>
    </location>
</feature>
<feature type="sequence conflict" description="In Ref. 2; AAD24413." evidence="7" ref="2">
    <original>P</original>
    <variation>L</variation>
    <location>
        <position position="96"/>
    </location>
</feature>
<feature type="sequence conflict" description="In Ref. 2; AAD24413." evidence="7" ref="2">
    <original>D</original>
    <variation>N</variation>
    <location>
        <position position="329"/>
    </location>
</feature>
<feature type="sequence conflict" description="In Ref. 2; AAD24413." evidence="7" ref="2">
    <original>ATATTAT</original>
    <variation>TATA</variation>
    <location>
        <begin position="613"/>
        <end position="619"/>
    </location>
</feature>
<feature type="sequence conflict" description="In Ref. 2; AAD24413." evidence="7" ref="2">
    <original>R</original>
    <variation>K</variation>
    <location>
        <position position="708"/>
    </location>
</feature>
<keyword id="KW-0007">Acetylation</keyword>
<keyword id="KW-0010">Activator</keyword>
<keyword id="KW-0963">Cytoplasm</keyword>
<keyword id="KW-0238">DNA-binding</keyword>
<keyword id="KW-0379">Hydroxylation</keyword>
<keyword id="KW-1017">Isopeptide bond</keyword>
<keyword id="KW-0539">Nucleus</keyword>
<keyword id="KW-0597">Phosphoprotein</keyword>
<keyword id="KW-1185">Reference proteome</keyword>
<keyword id="KW-0677">Repeat</keyword>
<keyword id="KW-0702">S-nitrosylation</keyword>
<keyword id="KW-0804">Transcription</keyword>
<keyword id="KW-0805">Transcription regulation</keyword>
<keyword id="KW-0832">Ubl conjugation</keyword>
<sequence length="825" mass="92319">MEGAGGENEKKKMSSERRKEKSRDAARSRRSKESEVFYELAHQLPLPHNVSSHLDKASVMRLTISYLRVRKLLDAGDLDIEDEMKAQMNCFYLKAPDGFVMVLTDDGDMIYISDNVNKYMGLTQFELTGHSVFDFTHPCDHEEMREMLTHRNGPVRKGKEQNTQRSFFLRMKCTLTSRGRTMNIKSATWKVLHCTGHIHVYDTSSNQPQCGYKKPPMTCLVLICEPIPHPSNIEIPLDSKTFLSRHSLDMKFSYCDERITELMGYEPEELLGRSIYEYYHALDSDHLTKTHHDMFTKGQVTTGQYRMLAKRGGYVWVETQATVIYNTKDSQPQCIVCVNYVVSGIIQHDLIFSLQQTESVLKPVESSDMKMTQLFTKVESEDTSCLFDKLKKEPDALTLLAPAAGDTIISLDFGSDDTETEDQQLEDVPLYNDVMFPSSNEKLNINLAMSPLPASETPKPLRSSADPALNQEVALKLESSPESLGLSFTMPQIQDQPASPSDGSTRQSSPEPNSPSEYCFDVDSDMVNVFKLELVEKLFAEDTEAKNPFSAQDTDLDLEMLAPYIPMDDDFQLRSFDQLSPLESNSPSPPSVSTVTGFQQTQLQKPTITVTAATATTATTTDESKAVTKDNIEDIKILIASPPSTQVPQEMTTAKASAYSGTHSRTASPDRAGKRVIEKTDKAHPRSLNLSVTLNQRNTVPEEELNPRTIALQNAQRKRKMEHDGSLFQAAGIGTLLQQPGDRAPTMSLSWKRVKGYISSEQDGMEQKTIFLIPSDLACRLLGQSMDESGLPQLTSYDCEVNAPIQGSRNLLQGEELLRALDQVN</sequence>
<evidence type="ECO:0000250" key="1">
    <source>
        <dbReference type="UniProtKB" id="Q16665"/>
    </source>
</evidence>
<evidence type="ECO:0000250" key="2">
    <source>
        <dbReference type="UniProtKB" id="Q61221"/>
    </source>
</evidence>
<evidence type="ECO:0000255" key="3"/>
<evidence type="ECO:0000255" key="4">
    <source>
        <dbReference type="PROSITE-ProRule" id="PRU00140"/>
    </source>
</evidence>
<evidence type="ECO:0000255" key="5">
    <source>
        <dbReference type="PROSITE-ProRule" id="PRU00981"/>
    </source>
</evidence>
<evidence type="ECO:0000256" key="6">
    <source>
        <dbReference type="SAM" id="MobiDB-lite"/>
    </source>
</evidence>
<evidence type="ECO:0000305" key="7"/>
<reference key="1">
    <citation type="journal article" date="2001" name="Biochem. J.">
        <title>Perivenous expression of the mRNA of the three hypoxia-inducible factor a-subunits HIF-1a, HIF2a and HIF3a in rat liver.</title>
        <authorList>
            <person name="Kietzmann T."/>
            <person name="Cornesse Y."/>
            <person name="Brechtel K."/>
            <person name="Modaressi S."/>
            <person name="Jungermann K."/>
        </authorList>
    </citation>
    <scope>NUCLEOTIDE SEQUENCE [MRNA]</scope>
    <source>
        <strain>Wistar</strain>
        <tissue>Hepatocyte</tissue>
    </source>
</reference>
<reference key="2">
    <citation type="journal article" date="2001" name="Physiol. Genomics">
        <title>Oxygen-dependent expression of hypoxia-inducible factor-1alpha in renal medullary cells of rats.</title>
        <authorList>
            <person name="Zou A.-P."/>
            <person name="Yang Z.-Z."/>
            <person name="Li P.-L."/>
            <person name="Cowley A.W. Jr."/>
        </authorList>
    </citation>
    <scope>NUCLEOTIDE SEQUENCE [MRNA]</scope>
    <source>
        <strain>Sprague-Dawley</strain>
        <tissue>Kidney</tissue>
    </source>
</reference>
<gene>
    <name type="primary">Hif1a</name>
</gene>
<proteinExistence type="evidence at transcript level"/>
<name>HIF1A_RAT</name>
<comment type="function">
    <text evidence="1 2">Functions as a master transcriptional regulator of the adaptive response to hypoxia. Under hypoxic conditions, activates the transcription of over 40 genes, including erythropoietin, glucose transporters, glycolytic enzymes, vascular endothelial growth factor, HILPDA, and other genes whose protein products increase oxygen delivery or facilitate metabolic adaptation to hypoxia. Plays an essential role in embryonic vascularization, tumor angiogenesis and pathophysiology of ischemic disease (By similarity). Heterodimerizes with ARNT; heterodimer binds to core DNA sequence 5'-TACGTG-3' within the hypoxia response element (HRE) of target gene promoters (By similarity). Activation requires recruitment of transcriptional coactivators such as CREBBP and EP300. Activity is enhanced by interaction with NCOA1 and/or NCOA2. Interaction with redox regulatory protein APEX1 seems to activate CTAD and potentiates activation by NCOA1 and CREBBP. Involved in the axonal distribution and transport of mitochondria in neurons during hypoxia (By similarity).</text>
</comment>
<comment type="activity regulation">
    <text evidence="1">Induced by reactive oxygen species (ROS).</text>
</comment>
<comment type="subunit">
    <text evidence="1 2">Interacts with the ARNT; forms a heterodimer that binds core DNA sequence 5'-TACGTG-3' within the hypoxia response element (HRE) of target gene promoters (By similarity). Interacts with COPS5; the interaction increases the transcriptional activity of HIF1A through increased stability (By similarity). Interacts with EP300 (via TAZ-type 1 domains); the interaction is stimulated in response to hypoxia and inhibited by CITED2. Interacts with CREBBP (via TAZ-type 1 domains). Interacts with NCOA1, NCOA2, APEX1 and HSP90. Interacts (hydroxylated within the ODD domain) with VHLL (via beta domain); the interaction, leads to polyubiquitination and subsequent HIF1A proteasomal degradation. During hypoxia, sumoylated HIF1A also binds VHL; the interaction promotes the ubiquitination of HIF1A (By similarity). Interacts with SENP1; the interaction desumoylates HIF1A resulting in stabilization and activation of transcription (By similarity). Interacts (via the ODD domain) with NAA10; the interaction appears not to acetylate HIF1A nor have any affect on protein stability, during hypoxia. Interacts with RWDD3; the interaction enhances HIF1A sumoylation (By similarity). Interacts with TSGA10. Interacts with HIF3A (By similarity). Interacts with RORA (via the DNA binding domain); the interaction enhances HIF1A transcription under hypoxia through increasing protein stability. Interaction with PSMA7 inhibits the transactivation activity of HIF1A under both normoxic and hypoxia-mimicking conditions. Interacts with USP20. Interacts with RACK1; promotes HIF1A ubiquitination and proteasome-mediated degradation. Interacts (via N-terminus) with USP19. Interacts with SIRT2. Interacts (deacetylated form) with EGLN1. Interacts with CBFA2T3. Interacts with HSP90AA1 and HSP90AB1. Interacts with DCUN1D1; this interaction increases the interaction between VHL and DCUN1D1. Interacts with HIF1AN (By similarity).</text>
</comment>
<comment type="subcellular location">
    <subcellularLocation>
        <location evidence="1">Cytoplasm</location>
    </subcellularLocation>
    <subcellularLocation>
        <location>Nucleus</location>
    </subcellularLocation>
    <subcellularLocation>
        <location evidence="2">Nucleus speckle</location>
    </subcellularLocation>
    <text evidence="1 2">Colocalizes with HIF3A in the nucleus and speckles (By similarity). Cytoplasmic in normoxia, nuclear translocation in response to hypoxia (By similarity).</text>
</comment>
<comment type="tissue specificity">
    <text>Expressed in the kidney, higher expression is seen in the renal medulla than in the cortex. Expressed also in the perivenous zone of the liver.</text>
</comment>
<comment type="domain">
    <text evidence="1">Contains two independent C-terminal transactivation domains, NTAD and CTAD, which function synergistically. Their transcriptional activity is repressed by an intervening inhibitory domain (ID) (By similarity).</text>
</comment>
<comment type="PTM">
    <text evidence="1">S-nitrosylation of Cys-799 may be responsible for increased recruitment of p300 coactivator necessary for transcriptional activity of HIF-1 complex.</text>
</comment>
<comment type="PTM">
    <text evidence="1">Acetylation of Lys-531 by ARD1 increases interaction with VHL and stimulates subsequent proteasomal degradation. Deacetylated by SIRT2 increases its interaction with and hydroxylation by EGLN1 thereby inactivating HIF1A activity by inducing its proteasomal degradation (By similarity).</text>
</comment>
<comment type="PTM">
    <text evidence="1">Ubiquitinated; in normoxia, following hydroxylation and interaction with VHL. Lys-531 appears to be the principal site of ubiquitination. Clioquinol, the Cu/Zn-chelator, inhibits ubiquitination through preventing hydroxylation at Asn-802. Ubiquitinated by E3 ligase VHL. Deubiquitinated by UCHL1 (By similarity).</text>
</comment>
<comment type="PTM">
    <text evidence="1 2">Requires phosphorylation for DNA-binding. Phosphorylation at Ser-247 by CSNK1D/CK1 represses kinase activity and impairs ARNT binding. Phosphorylation by GSK3-beta and PLK3 promote degradation by the proteasome (By similarity).</text>
</comment>
<comment type="PTM">
    <text evidence="1">The iron and 2-oxoglutarate dependent 3-hydroxylation of asparagine is (S) stereospecific within HIF CTAD domains.</text>
</comment>
<comment type="PTM">
    <text evidence="1 2">Sumoylated; with SUMO1 under hypoxia. Sumoylation is enhanced through interaction with RWDD3. Both sumoylation and desumoylation seem to be involved in the regulation of its stability during hypoxia. Sumoylation can promote either its stabilization or its VHL-dependent degradation by promoting hydroxyproline-independent HIF1A-VHL complex binding, thus leading to HIF1A ubiquitination and proteasomal degradation. Desumoylation by SENP1 increases its stability amd transcriptional activity. There is a disaccord between various publications on the effect of sumoylation and desumoylation on its stability and transcriptional activity (By similarity).</text>
</comment>
<comment type="PTM">
    <text evidence="1">In normoxia, is hydroxylated on Pro-402 and Pro-563 in the oxygen-dependent degradation domain (ODD) by EGLN1/PHD2 and EGLN2/PHD1. EGLN3/PHD3 has also been shown to hydroxylate Pro-563. The hydroxylated prolines promote interaction with VHL, initiating rapid ubiquitination and subsequent proteasomal degradation. Deubiquitinated by USP20. Under hypoxia, proline hydroxylation is impaired and ubiquitination is attenuated, resulting in stabilization (By similarity). In normoxia, is hydroxylated on Asn-802 by HIF1AN, thus abrogating interaction with CREBBP and EP300 and preventing transcriptional activation. Repressed by iron ion, via Fe(2+) prolyl hydroxylase (PHD) enzymes-mediated hydroxylation and subsequent proteasomal degradation.</text>
</comment>